<proteinExistence type="inferred from homology"/>
<organism>
    <name type="scientific">Varicella-zoster virus (strain Dumas)</name>
    <name type="common">HHV-3</name>
    <name type="synonym">Human herpesvirus 3</name>
    <dbReference type="NCBI Taxonomy" id="10338"/>
    <lineage>
        <taxon>Viruses</taxon>
        <taxon>Duplodnaviria</taxon>
        <taxon>Heunggongvirae</taxon>
        <taxon>Peploviricota</taxon>
        <taxon>Herviviricetes</taxon>
        <taxon>Herpesvirales</taxon>
        <taxon>Orthoherpesviridae</taxon>
        <taxon>Alphaherpesvirinae</taxon>
        <taxon>Varicellovirus</taxon>
        <taxon>Varicellovirus humanalpha3</taxon>
        <taxon>Human herpesvirus 3</taxon>
    </lineage>
</organism>
<reference key="1">
    <citation type="journal article" date="1986" name="J. Gen. Virol.">
        <title>The complete DNA sequence of varicella-zoster virus.</title>
        <authorList>
            <person name="Davison A.J."/>
            <person name="Scott J.E."/>
        </authorList>
    </citation>
    <scope>NUCLEOTIDE SEQUENCE [LARGE SCALE GENOMIC DNA]</scope>
</reference>
<accession>P09267</accession>
<organismHost>
    <name type="scientific">Homo sapiens</name>
    <name type="common">Human</name>
    <dbReference type="NCBI Taxonomy" id="9606"/>
</organismHost>
<sequence>MHVISETLAYGHVPAFIMGSTLVRPSLNATAEENPASETRCLLRVLAGRTVDLPGGGTLHITCTKTYVIIGKYSKPGERLSLARLIGRAMTPGGARTFIILAMKEKRSTTLGYECGTGLHLLAPSMGTFLRTHGLSNRDLCLWRGNIYDMHMQRLMFWENIAQNTTETPCITSTLTCNLTEDSGEAALTTSDRPTLPTLTAQGRPTVSNIRGILKGSPRQQPVCHRVRFAEPTEGVLM</sequence>
<dbReference type="EMBL" id="X04370">
    <property type="protein sequence ID" value="CAA27885.1"/>
    <property type="molecule type" value="Genomic_DNA"/>
</dbReference>
<dbReference type="PIR" id="B27212">
    <property type="entry name" value="WZBE2"/>
</dbReference>
<dbReference type="Proteomes" id="UP000002602">
    <property type="component" value="Genome"/>
</dbReference>
<dbReference type="GO" id="GO:0033644">
    <property type="term" value="C:host cell membrane"/>
    <property type="evidence" value="ECO:0007669"/>
    <property type="project" value="UniProtKB-SubCell"/>
</dbReference>
<dbReference type="GO" id="GO:0016020">
    <property type="term" value="C:membrane"/>
    <property type="evidence" value="ECO:0007669"/>
    <property type="project" value="UniProtKB-KW"/>
</dbReference>
<dbReference type="InterPro" id="IPR010741">
    <property type="entry name" value="DUF1314"/>
</dbReference>
<dbReference type="Pfam" id="PF07013">
    <property type="entry name" value="DUF1314"/>
    <property type="match status" value="1"/>
</dbReference>
<feature type="chain" id="PRO_0000116158" description="Membrane protein 2">
    <location>
        <begin position="1"/>
        <end position="238"/>
    </location>
</feature>
<name>ORF2_VZVD</name>
<comment type="subcellular location">
    <subcellularLocation>
        <location evidence="1">Host membrane</location>
        <topology evidence="1">Peripheral membrane protein</topology>
    </subcellularLocation>
</comment>
<comment type="PTM">
    <text evidence="1">Phosphorylated by host.</text>
</comment>
<comment type="similarity">
    <text evidence="2">Belongs to the varicellovirus ORF2 protein family.</text>
</comment>
<keyword id="KW-1043">Host membrane</keyword>
<keyword id="KW-0472">Membrane</keyword>
<keyword id="KW-0597">Phosphoprotein</keyword>
<keyword id="KW-1185">Reference proteome</keyword>
<evidence type="ECO:0000250" key="1"/>
<evidence type="ECO:0000305" key="2"/>
<gene>
    <name type="ORF">ORF2</name>
</gene>
<protein>
    <recommendedName>
        <fullName>Membrane protein 2</fullName>
    </recommendedName>
    <alternativeName>
        <fullName>Membrane ORF2 protein</fullName>
    </alternativeName>
</protein>